<protein>
    <recommendedName>
        <fullName>Ornithine decarboxylase antizyme</fullName>
        <shortName>ODC-Az</shortName>
    </recommendedName>
</protein>
<accession>Q9NHZ6</accession>
<accession>A8WIR2</accession>
<accession>O44900</accession>
<evidence type="ECO:0000250" key="1">
    <source>
        <dbReference type="UniProtKB" id="P54368"/>
    </source>
</evidence>
<evidence type="ECO:0000269" key="2">
    <source>
    </source>
</evidence>
<evidence type="ECO:0000305" key="3"/>
<evidence type="ECO:0000312" key="4">
    <source>
        <dbReference type="WormBase" id="ZK484.1a"/>
    </source>
</evidence>
<evidence type="ECO:0000312" key="5">
    <source>
        <dbReference type="WormBase" id="ZK484.1b"/>
    </source>
</evidence>
<dbReference type="EMBL" id="AF217278">
    <property type="protein sequence ID" value="AAF68269.1"/>
    <property type="molecule type" value="mRNA"/>
</dbReference>
<dbReference type="EMBL" id="FO080687">
    <property type="protein sequence ID" value="CCD65806.1"/>
    <property type="molecule type" value="Genomic_DNA"/>
</dbReference>
<dbReference type="EMBL" id="FO080687">
    <property type="protein sequence ID" value="CCD65807.1"/>
    <property type="molecule type" value="Genomic_DNA"/>
</dbReference>
<dbReference type="PIR" id="T32868">
    <property type="entry name" value="T32868"/>
</dbReference>
<dbReference type="RefSeq" id="NP_001122567.1">
    <property type="nucleotide sequence ID" value="NM_001129095.1"/>
</dbReference>
<dbReference type="RefSeq" id="NP_001122568.1">
    <property type="nucleotide sequence ID" value="NM_001129096.2"/>
</dbReference>
<dbReference type="RefSeq" id="NP_001367573.1">
    <molecule id="Q9NHZ6-1"/>
    <property type="nucleotide sequence ID" value="NM_001380458.1"/>
</dbReference>
<dbReference type="RefSeq" id="NP_001367574.1">
    <molecule id="Q9NHZ6-2"/>
    <property type="nucleotide sequence ID" value="NM_001380459.2"/>
</dbReference>
<dbReference type="SMR" id="Q9NHZ6"/>
<dbReference type="BioGRID" id="37744">
    <property type="interactions" value="6"/>
</dbReference>
<dbReference type="FunCoup" id="Q9NHZ6">
    <property type="interactions" value="353"/>
</dbReference>
<dbReference type="IntAct" id="Q9NHZ6">
    <property type="interactions" value="1"/>
</dbReference>
<dbReference type="STRING" id="6239.ZK484.1a.1"/>
<dbReference type="PaxDb" id="6239-ZK484.1a"/>
<dbReference type="PeptideAtlas" id="Q9NHZ6"/>
<dbReference type="EnsemblMetazoa" id="ZK484.1a.1">
    <molecule id="Q9NHZ6-1"/>
    <property type="protein sequence ID" value="ZK484.1a.1"/>
    <property type="gene ID" value="WBGene00022748"/>
</dbReference>
<dbReference type="EnsemblMetazoa" id="ZK484.1b.1">
    <molecule id="Q9NHZ6-2"/>
    <property type="protein sequence ID" value="ZK484.1b.1"/>
    <property type="gene ID" value="WBGene00022748"/>
</dbReference>
<dbReference type="GeneID" id="172291"/>
<dbReference type="UCSC" id="ZK484.1b.2">
    <molecule id="Q9NHZ6-1"/>
    <property type="organism name" value="c. elegans"/>
</dbReference>
<dbReference type="AGR" id="WB:WBGene00022748"/>
<dbReference type="WormBase" id="ZK484.1a">
    <molecule id="Q9NHZ6-1"/>
    <property type="protein sequence ID" value="CE41745"/>
    <property type="gene ID" value="WBGene00022748"/>
    <property type="gene designation" value="oaz-1"/>
</dbReference>
<dbReference type="WormBase" id="ZK484.1b">
    <molecule id="Q9NHZ6-2"/>
    <property type="protein sequence ID" value="CE41746"/>
    <property type="gene ID" value="WBGene00022748"/>
    <property type="gene designation" value="oaz-1"/>
</dbReference>
<dbReference type="eggNOG" id="KOG4387">
    <property type="taxonomic scope" value="Eukaryota"/>
</dbReference>
<dbReference type="HOGENOM" id="CLU_146905_0_0_1"/>
<dbReference type="InParanoid" id="Q9NHZ6"/>
<dbReference type="OMA" id="SSDWCCH"/>
<dbReference type="OrthoDB" id="5959761at2759"/>
<dbReference type="Reactome" id="R-CEL-350562">
    <property type="pathway name" value="Regulation of ornithine decarboxylase (ODC)"/>
</dbReference>
<dbReference type="PRO" id="PR:Q9NHZ6"/>
<dbReference type="Proteomes" id="UP000001940">
    <property type="component" value="Chromosome I"/>
</dbReference>
<dbReference type="Bgee" id="WBGene00022748">
    <property type="expression patterns" value="Expressed in pharyngeal muscle cell (C elegans) and 4 other cell types or tissues"/>
</dbReference>
<dbReference type="GO" id="GO:0005737">
    <property type="term" value="C:cytoplasm"/>
    <property type="evidence" value="ECO:0000318"/>
    <property type="project" value="GO_Central"/>
</dbReference>
<dbReference type="GO" id="GO:0005634">
    <property type="term" value="C:nucleus"/>
    <property type="evidence" value="ECO:0000318"/>
    <property type="project" value="GO_Central"/>
</dbReference>
<dbReference type="GO" id="GO:0008073">
    <property type="term" value="F:ornithine decarboxylase inhibitor activity"/>
    <property type="evidence" value="ECO:0000318"/>
    <property type="project" value="GO_Central"/>
</dbReference>
<dbReference type="GO" id="GO:0045732">
    <property type="term" value="P:positive regulation of protein catabolic process"/>
    <property type="evidence" value="ECO:0000318"/>
    <property type="project" value="GO_Central"/>
</dbReference>
<dbReference type="GO" id="GO:0075523">
    <property type="term" value="P:viral translational frameshifting"/>
    <property type="evidence" value="ECO:0007669"/>
    <property type="project" value="UniProtKB-KW"/>
</dbReference>
<dbReference type="Gene3D" id="3.40.630.60">
    <property type="match status" value="1"/>
</dbReference>
<dbReference type="InterPro" id="IPR016181">
    <property type="entry name" value="Acyl_CoA_acyltransferase"/>
</dbReference>
<dbReference type="InterPro" id="IPR002993">
    <property type="entry name" value="ODC_AZ"/>
</dbReference>
<dbReference type="InterPro" id="IPR038581">
    <property type="entry name" value="ODC_AZ_sf"/>
</dbReference>
<dbReference type="PANTHER" id="PTHR10279">
    <property type="entry name" value="ORNITHINE DECARBOXYLASE ANTIZYME"/>
    <property type="match status" value="1"/>
</dbReference>
<dbReference type="PANTHER" id="PTHR10279:SF10">
    <property type="entry name" value="ORNITHINE DECARBOXYLASE ANTIZYME"/>
    <property type="match status" value="1"/>
</dbReference>
<dbReference type="Pfam" id="PF02100">
    <property type="entry name" value="ODC_AZ"/>
    <property type="match status" value="1"/>
</dbReference>
<dbReference type="SUPFAM" id="SSF55729">
    <property type="entry name" value="Acyl-CoA N-acyltransferases (Nat)"/>
    <property type="match status" value="1"/>
</dbReference>
<dbReference type="PROSITE" id="PS01337">
    <property type="entry name" value="ODC_AZ"/>
    <property type="match status" value="1"/>
</dbReference>
<feature type="chain" id="PRO_0000220861" description="Ornithine decarboxylase antizyme">
    <location>
        <begin position="1"/>
        <end position="159"/>
    </location>
</feature>
<feature type="splice variant" id="VSP_032960" description="In isoform b." evidence="3">
    <location>
        <begin position="43"/>
        <end position="159"/>
    </location>
</feature>
<reference key="1">
    <citation type="journal article" date="2000" name="EMBO J.">
        <title>Conservation of polyamine regulation by translational frameshifting from yeast to mammals.</title>
        <authorList>
            <person name="Ivanov I.P."/>
            <person name="Matsufuji S."/>
            <person name="Murakami Y."/>
            <person name="Gesteland R.F."/>
            <person name="Atkins J.F."/>
        </authorList>
    </citation>
    <scope>NUCLEOTIDE SEQUENCE [MRNA] (ISOFORM A)</scope>
    <scope>RIBOSOMAL FRAMESHIFTING</scope>
</reference>
<reference key="2">
    <citation type="journal article" date="1998" name="Science">
        <title>Genome sequence of the nematode C. elegans: a platform for investigating biology.</title>
        <authorList>
            <consortium name="The C. elegans sequencing consortium"/>
        </authorList>
    </citation>
    <scope>NUCLEOTIDE SEQUENCE [LARGE SCALE GENOMIC DNA]</scope>
    <source>
        <strain>Bristol N2</strain>
    </source>
</reference>
<proteinExistence type="evidence at transcript level"/>
<sequence>MSSILSSNFTNKSNQLVNESAVDSSLTASPCSTQPGDVGWCFDAPHGVLTKLPNETRAIVSAVSPNWRVTSIGEKTLAIMIPHDQPVLGISKKNFVDLLEFAEDKLEMERVLAVFEKARINPTEGFPRTLRYVGFRPYAIDEHPVHLPAEKYFIMSYKV</sequence>
<name>OAZ_CAEEL</name>
<organism>
    <name type="scientific">Caenorhabditis elegans</name>
    <dbReference type="NCBI Taxonomy" id="6239"/>
    <lineage>
        <taxon>Eukaryota</taxon>
        <taxon>Metazoa</taxon>
        <taxon>Ecdysozoa</taxon>
        <taxon>Nematoda</taxon>
        <taxon>Chromadorea</taxon>
        <taxon>Rhabditida</taxon>
        <taxon>Rhabditina</taxon>
        <taxon>Rhabditomorpha</taxon>
        <taxon>Rhabditoidea</taxon>
        <taxon>Rhabditidae</taxon>
        <taxon>Peloderinae</taxon>
        <taxon>Caenorhabditis</taxon>
    </lineage>
</organism>
<keyword id="KW-1185">Reference proteome</keyword>
<keyword id="KW-0688">Ribosomal frameshifting</keyword>
<gene>
    <name evidence="4" type="primary">oaz-1</name>
    <name evidence="4" type="ORF">ZK484.1</name>
</gene>
<comment type="function">
    <text evidence="1">Ornithine decarboxylase (ODC) antizyme protein that negatively regulates ODC activity and intracellular polyamine biosynthesis and uptake in response to increased intracellular polyamine levels. Binds to ODC monomers, inhibiting the assembly of the functional ODC homodimer, and targets the monomers for ubiquitin-independent proteolytic destruction by the 26S proteasome.</text>
</comment>
<comment type="subunit">
    <text evidence="1">Interacts with ODC1 and thereby sterically blocks ODC homodimerization.</text>
</comment>
<comment type="alternative products">
    <event type="ribosomal frameshifting"/>
    <isoform>
        <id>Q9NHZ6-1</id>
        <name evidence="4">a</name>
        <sequence type="displayed"/>
    </isoform>
    <isoform>
        <id>Q9NHZ6-2</id>
        <name evidence="5">b</name>
        <sequence type="described" ref="VSP_032960"/>
    </isoform>
    <text evidence="2">A ribosomal frameshift occurs between the codons for Phe-42 and Asp-43. An autoregulatory mechanism enables modulation of frameshifting according to the cellular concentration of polyamines.</text>
</comment>
<comment type="similarity">
    <text evidence="3">Belongs to the ODC antizyme family.</text>
</comment>